<proteinExistence type="inferred from homology"/>
<name>MZM1_YEAS8</name>
<sequence>MSTRTKALNAYRHGLRATRIAFRNDAEVLLAARAKMRSGMLCPPDPKLTTEDQIQHLEDVAVFLRRNLVQGKKVDGSSTKEPRYHLNIHKDTELGDNETIADPTARVKTNLKARPFKCSDKKQ</sequence>
<accession>C8Z651</accession>
<organism>
    <name type="scientific">Saccharomyces cerevisiae (strain Lalvin EC1118 / Prise de mousse)</name>
    <name type="common">Baker's yeast</name>
    <dbReference type="NCBI Taxonomy" id="643680"/>
    <lineage>
        <taxon>Eukaryota</taxon>
        <taxon>Fungi</taxon>
        <taxon>Dikarya</taxon>
        <taxon>Ascomycota</taxon>
        <taxon>Saccharomycotina</taxon>
        <taxon>Saccharomycetes</taxon>
        <taxon>Saccharomycetales</taxon>
        <taxon>Saccharomycetaceae</taxon>
        <taxon>Saccharomyces</taxon>
    </lineage>
</organism>
<dbReference type="EMBL" id="FN393063">
    <property type="protein sequence ID" value="CAY78990.1"/>
    <property type="molecule type" value="Genomic_DNA"/>
</dbReference>
<dbReference type="SMR" id="C8Z651"/>
<dbReference type="TopDownProteomics" id="C8Z651"/>
<dbReference type="HOGENOM" id="CLU_147114_2_2_1"/>
<dbReference type="OrthoDB" id="24544at4893"/>
<dbReference type="Proteomes" id="UP000000286">
    <property type="component" value="Chromosome IV, Scaffold EC1118_1D0"/>
</dbReference>
<dbReference type="GO" id="GO:0005759">
    <property type="term" value="C:mitochondrial matrix"/>
    <property type="evidence" value="ECO:0007669"/>
    <property type="project" value="UniProtKB-SubCell"/>
</dbReference>
<dbReference type="GO" id="GO:0044183">
    <property type="term" value="F:protein folding chaperone"/>
    <property type="evidence" value="ECO:0007669"/>
    <property type="project" value="TreeGrafter"/>
</dbReference>
<dbReference type="GO" id="GO:0034551">
    <property type="term" value="P:mitochondrial respiratory chain complex III assembly"/>
    <property type="evidence" value="ECO:0007669"/>
    <property type="project" value="InterPro"/>
</dbReference>
<dbReference type="CDD" id="cd20267">
    <property type="entry name" value="Complex1_LYR_LYRM7"/>
    <property type="match status" value="1"/>
</dbReference>
<dbReference type="InterPro" id="IPR045298">
    <property type="entry name" value="Complex1_LYR_LYRM7"/>
</dbReference>
<dbReference type="InterPro" id="IPR050435">
    <property type="entry name" value="MZM1/LYRM7"/>
</dbReference>
<dbReference type="PANTHER" id="PTHR46749">
    <property type="entry name" value="COMPLEX III ASSEMBLY FACTOR LYRM7"/>
    <property type="match status" value="1"/>
</dbReference>
<dbReference type="PANTHER" id="PTHR46749:SF1">
    <property type="entry name" value="COMPLEX III ASSEMBLY FACTOR LYRM7"/>
    <property type="match status" value="1"/>
</dbReference>
<protein>
    <recommendedName>
        <fullName>Mitochondrial zinc maintenance protein 1, mitochondrial</fullName>
    </recommendedName>
    <alternativeName>
        <fullName>Altered inheritance of mitochondria protein 8</fullName>
    </alternativeName>
    <alternativeName>
        <fullName>Found in mitochondrial proteome protein 36</fullName>
    </alternativeName>
</protein>
<gene>
    <name type="primary">MZM1</name>
    <name type="synonym">AIM8</name>
    <name type="synonym">FMP36</name>
    <name type="ORF">EC1118_1D0_8075g</name>
</gene>
<feature type="transit peptide" description="Mitochondrion" evidence="2">
    <location>
        <begin position="1"/>
        <end position="24"/>
    </location>
</feature>
<feature type="chain" id="PRO_0000405512" description="Mitochondrial zinc maintenance protein 1, mitochondrial">
    <location>
        <begin position="25"/>
        <end position="123"/>
    </location>
</feature>
<comment type="function">
    <text evidence="1">Assembly factor required for Rieske Fe-S protein RIP1 incorporation into the cytochrome b-c1 (CIII) complex. Functions as a chaperone, binding to this subunit within the mitochondrial matrix and stabilizing it prior to its translocation and insertion into the late CIII dimeric intermediate within the mitochondrial inner membrane. Modulates the mitochondrial matrix zinc pool (By similarity).</text>
</comment>
<comment type="subunit">
    <text evidence="1">Interacts with RIP1.</text>
</comment>
<comment type="subcellular location">
    <subcellularLocation>
        <location evidence="1">Mitochondrion matrix</location>
    </subcellularLocation>
</comment>
<comment type="similarity">
    <text evidence="3">Belongs to the complex I LYR family. MZM1 subfamily.</text>
</comment>
<reference key="1">
    <citation type="journal article" date="2009" name="Proc. Natl. Acad. Sci. U.S.A.">
        <title>Eukaryote-to-eukaryote gene transfer events revealed by the genome sequence of the wine yeast Saccharomyces cerevisiae EC1118.</title>
        <authorList>
            <person name="Novo M."/>
            <person name="Bigey F."/>
            <person name="Beyne E."/>
            <person name="Galeote V."/>
            <person name="Gavory F."/>
            <person name="Mallet S."/>
            <person name="Cambon B."/>
            <person name="Legras J.-L."/>
            <person name="Wincker P."/>
            <person name="Casaregola S."/>
            <person name="Dequin S."/>
        </authorList>
    </citation>
    <scope>NUCLEOTIDE SEQUENCE [LARGE SCALE GENOMIC DNA]</scope>
    <source>
        <strain>Lalvin EC1118 / Prise de mousse</strain>
    </source>
</reference>
<keyword id="KW-0143">Chaperone</keyword>
<keyword id="KW-0496">Mitochondrion</keyword>
<keyword id="KW-0809">Transit peptide</keyword>
<evidence type="ECO:0000250" key="1"/>
<evidence type="ECO:0000255" key="2"/>
<evidence type="ECO:0000305" key="3"/>